<accession>Q8FE69</accession>
<name>AC4CH_ECOL6</name>
<organism>
    <name type="scientific">Escherichia coli O6:H1 (strain CFT073 / ATCC 700928 / UPEC)</name>
    <dbReference type="NCBI Taxonomy" id="199310"/>
    <lineage>
        <taxon>Bacteria</taxon>
        <taxon>Pseudomonadati</taxon>
        <taxon>Pseudomonadota</taxon>
        <taxon>Gammaproteobacteria</taxon>
        <taxon>Enterobacterales</taxon>
        <taxon>Enterobacteriaceae</taxon>
        <taxon>Escherichia</taxon>
    </lineage>
</organism>
<dbReference type="EC" id="3.5.1.135" evidence="2"/>
<dbReference type="EMBL" id="AE014075">
    <property type="protein sequence ID" value="AAN81929.1"/>
    <property type="molecule type" value="Genomic_DNA"/>
</dbReference>
<dbReference type="RefSeq" id="WP_001182956.1">
    <property type="nucleotide sequence ID" value="NZ_CP051263.1"/>
</dbReference>
<dbReference type="SMR" id="Q8FE69"/>
<dbReference type="STRING" id="199310.c3481"/>
<dbReference type="KEGG" id="ecc:c3481"/>
<dbReference type="eggNOG" id="COG3097">
    <property type="taxonomic scope" value="Bacteria"/>
</dbReference>
<dbReference type="HOGENOM" id="CLU_152586_0_0_6"/>
<dbReference type="BioCyc" id="ECOL199310:C3481-MONOMER"/>
<dbReference type="Proteomes" id="UP000001410">
    <property type="component" value="Chromosome"/>
</dbReference>
<dbReference type="GO" id="GO:0005829">
    <property type="term" value="C:cytosol"/>
    <property type="evidence" value="ECO:0007669"/>
    <property type="project" value="TreeGrafter"/>
</dbReference>
<dbReference type="GO" id="GO:0016813">
    <property type="term" value="F:hydrolase activity, acting on carbon-nitrogen (but not peptide) bonds, in linear amidines"/>
    <property type="evidence" value="ECO:0007669"/>
    <property type="project" value="UniProtKB-UniRule"/>
</dbReference>
<dbReference type="GO" id="GO:0106251">
    <property type="term" value="F:N4-acetylcytidine amidohydrolase activity"/>
    <property type="evidence" value="ECO:0007669"/>
    <property type="project" value="RHEA"/>
</dbReference>
<dbReference type="CDD" id="cd06552">
    <property type="entry name" value="ASCH_yqfb_like"/>
    <property type="match status" value="1"/>
</dbReference>
<dbReference type="FunFam" id="2.30.130.30:FF:000001">
    <property type="entry name" value="UPF0267 protein YqfB"/>
    <property type="match status" value="1"/>
</dbReference>
<dbReference type="Gene3D" id="2.30.130.30">
    <property type="entry name" value="Hypothetical protein"/>
    <property type="match status" value="1"/>
</dbReference>
<dbReference type="HAMAP" id="MF_00684">
    <property type="entry name" value="ac4C_amidohydr"/>
    <property type="match status" value="1"/>
</dbReference>
<dbReference type="InterPro" id="IPR008314">
    <property type="entry name" value="AC4CH"/>
</dbReference>
<dbReference type="InterPro" id="IPR007374">
    <property type="entry name" value="ASCH_domain"/>
</dbReference>
<dbReference type="InterPro" id="IPR015947">
    <property type="entry name" value="PUA-like_sf"/>
</dbReference>
<dbReference type="NCBIfam" id="NF003443">
    <property type="entry name" value="PRK04980.1"/>
    <property type="match status" value="1"/>
</dbReference>
<dbReference type="PANTHER" id="PTHR38088">
    <property type="entry name" value="UCP029143 FAMILY PROTEIN"/>
    <property type="match status" value="1"/>
</dbReference>
<dbReference type="PANTHER" id="PTHR38088:SF2">
    <property type="entry name" value="UCP029143 FAMILY PROTEIN"/>
    <property type="match status" value="1"/>
</dbReference>
<dbReference type="Pfam" id="PF04266">
    <property type="entry name" value="ASCH"/>
    <property type="match status" value="1"/>
</dbReference>
<dbReference type="PIRSF" id="PIRSF029143">
    <property type="entry name" value="UCP029143"/>
    <property type="match status" value="1"/>
</dbReference>
<dbReference type="SMART" id="SM01022">
    <property type="entry name" value="ASCH"/>
    <property type="match status" value="1"/>
</dbReference>
<dbReference type="SUPFAM" id="SSF88697">
    <property type="entry name" value="PUA domain-like"/>
    <property type="match status" value="1"/>
</dbReference>
<proteinExistence type="inferred from homology"/>
<protein>
    <recommendedName>
        <fullName evidence="2">N(4)-acetylcytidine amidohydrolase</fullName>
        <shortName evidence="2">ac4C amidohydrolase</shortName>
        <ecNumber evidence="2">3.5.1.135</ecNumber>
    </recommendedName>
</protein>
<keyword id="KW-0378">Hydrolase</keyword>
<keyword id="KW-1185">Reference proteome</keyword>
<feature type="chain" id="PRO_0000214602" description="N(4)-acetylcytidine amidohydrolase">
    <location>
        <begin position="1"/>
        <end position="103"/>
    </location>
</feature>
<feature type="domain" description="ASCH" evidence="1">
    <location>
        <begin position="6"/>
        <end position="101"/>
    </location>
</feature>
<feature type="active site" description="Proton acceptor" evidence="2">
    <location>
        <position position="21"/>
    </location>
</feature>
<feature type="active site" description="Nucleophile" evidence="2">
    <location>
        <position position="24"/>
    </location>
</feature>
<feature type="active site" description="Proton donor" evidence="2">
    <location>
        <position position="74"/>
    </location>
</feature>
<reference key="1">
    <citation type="journal article" date="2002" name="Proc. Natl. Acad. Sci. U.S.A.">
        <title>Extensive mosaic structure revealed by the complete genome sequence of uropathogenic Escherichia coli.</title>
        <authorList>
            <person name="Welch R.A."/>
            <person name="Burland V."/>
            <person name="Plunkett G. III"/>
            <person name="Redford P."/>
            <person name="Roesch P."/>
            <person name="Rasko D."/>
            <person name="Buckles E.L."/>
            <person name="Liou S.-R."/>
            <person name="Boutin A."/>
            <person name="Hackett J."/>
            <person name="Stroud D."/>
            <person name="Mayhew G.F."/>
            <person name="Rose D.J."/>
            <person name="Zhou S."/>
            <person name="Schwartz D.C."/>
            <person name="Perna N.T."/>
            <person name="Mobley H.L.T."/>
            <person name="Donnenberg M.S."/>
            <person name="Blattner F.R."/>
        </authorList>
    </citation>
    <scope>NUCLEOTIDE SEQUENCE [LARGE SCALE GENOMIC DNA]</scope>
    <source>
        <strain>CFT073 / ATCC 700928 / UPEC</strain>
    </source>
</reference>
<comment type="function">
    <text evidence="2">Catalyzes the hydrolysis of N(4)-acetylcytidine (ac4C).</text>
</comment>
<comment type="catalytic activity">
    <reaction evidence="2">
        <text>N(4)-acetylcytidine + H2O = cytidine + acetate + H(+)</text>
        <dbReference type="Rhea" id="RHEA:62932"/>
        <dbReference type="ChEBI" id="CHEBI:15377"/>
        <dbReference type="ChEBI" id="CHEBI:15378"/>
        <dbReference type="ChEBI" id="CHEBI:17562"/>
        <dbReference type="ChEBI" id="CHEBI:30089"/>
        <dbReference type="ChEBI" id="CHEBI:70989"/>
        <dbReference type="EC" id="3.5.1.135"/>
    </reaction>
</comment>
<comment type="catalytic activity">
    <reaction evidence="2">
        <text>N(4)-acetyl-2'-deoxycytidine + H2O = 2'-deoxycytidine + acetate + H(+)</text>
        <dbReference type="Rhea" id="RHEA:62936"/>
        <dbReference type="ChEBI" id="CHEBI:15377"/>
        <dbReference type="ChEBI" id="CHEBI:15378"/>
        <dbReference type="ChEBI" id="CHEBI:15698"/>
        <dbReference type="ChEBI" id="CHEBI:30089"/>
        <dbReference type="ChEBI" id="CHEBI:146133"/>
        <dbReference type="EC" id="3.5.1.135"/>
    </reaction>
</comment>
<comment type="catalytic activity">
    <reaction evidence="2">
        <text>N(4)-acetylcytosine + H2O = cytosine + acetate + H(+)</text>
        <dbReference type="Rhea" id="RHEA:62940"/>
        <dbReference type="ChEBI" id="CHEBI:15377"/>
        <dbReference type="ChEBI" id="CHEBI:15378"/>
        <dbReference type="ChEBI" id="CHEBI:16040"/>
        <dbReference type="ChEBI" id="CHEBI:30089"/>
        <dbReference type="ChEBI" id="CHEBI:146134"/>
        <dbReference type="EC" id="3.5.1.135"/>
    </reaction>
</comment>
<comment type="similarity">
    <text evidence="2">Belongs to the N(4)-acetylcytidine amidohydrolase family.</text>
</comment>
<gene>
    <name type="primary">yqfB</name>
    <name type="ordered locus">c3481</name>
</gene>
<evidence type="ECO:0000255" key="1"/>
<evidence type="ECO:0000255" key="2">
    <source>
        <dbReference type="HAMAP-Rule" id="MF_00684"/>
    </source>
</evidence>
<sequence length="103" mass="11963">MQPNDITFFQRFQDDILAGRKTITIRDESESHFKTGDVLRVGRFEDDGYFCTIEVTATSTVTLDTLTEKHAEQENMTLTELKKVIADIYPDQTQFYVIEFKCL</sequence>